<proteinExistence type="inferred from homology"/>
<evidence type="ECO:0000255" key="1">
    <source>
        <dbReference type="HAMAP-Rule" id="MF_00270"/>
    </source>
</evidence>
<evidence type="ECO:0000305" key="2"/>
<comment type="function">
    <text evidence="1">Binds as a heterodimer with protein bS6 to the central domain of the 16S rRNA, where it helps stabilize the platform of the 30S subunit.</text>
</comment>
<comment type="subunit">
    <text evidence="1">Part of the 30S ribosomal subunit. Forms a tight heterodimer with protein bS6.</text>
</comment>
<comment type="similarity">
    <text evidence="1">Belongs to the bacterial ribosomal protein bS18 family.</text>
</comment>
<gene>
    <name evidence="1" type="primary">rpsR</name>
    <name type="ordered locus">Helmi_16410</name>
    <name type="ORF">HM1_1696</name>
</gene>
<organism>
    <name type="scientific">Heliobacterium modesticaldum (strain ATCC 51547 / Ice1)</name>
    <dbReference type="NCBI Taxonomy" id="498761"/>
    <lineage>
        <taxon>Bacteria</taxon>
        <taxon>Bacillati</taxon>
        <taxon>Bacillota</taxon>
        <taxon>Clostridia</taxon>
        <taxon>Eubacteriales</taxon>
        <taxon>Heliobacteriaceae</taxon>
        <taxon>Heliomicrobium</taxon>
    </lineage>
</organism>
<sequence>MQDRGDKPERRSRKGRRPRRRICFFCVDKIETVDYKEVGKLRKYITERGKILPRRVSGCCAKHQRQLTNAIKRARHVALLPFTVNE</sequence>
<feature type="chain" id="PRO_0000345484" description="Small ribosomal subunit protein bS18">
    <location>
        <begin position="1"/>
        <end position="86"/>
    </location>
</feature>
<protein>
    <recommendedName>
        <fullName evidence="1">Small ribosomal subunit protein bS18</fullName>
    </recommendedName>
    <alternativeName>
        <fullName evidence="2">30S ribosomal protein S18</fullName>
    </alternativeName>
</protein>
<reference key="1">
    <citation type="journal article" date="2008" name="J. Bacteriol.">
        <title>The genome of Heliobacterium modesticaldum, a phototrophic representative of the Firmicutes containing the simplest photosynthetic apparatus.</title>
        <authorList>
            <person name="Sattley W.M."/>
            <person name="Madigan M.T."/>
            <person name="Swingley W.D."/>
            <person name="Cheung P.C."/>
            <person name="Clocksin K.M."/>
            <person name="Conrad A.L."/>
            <person name="Dejesa L.C."/>
            <person name="Honchak B.M."/>
            <person name="Jung D.O."/>
            <person name="Karbach L.E."/>
            <person name="Kurdoglu A."/>
            <person name="Lahiri S."/>
            <person name="Mastrian S.D."/>
            <person name="Page L.E."/>
            <person name="Taylor H.L."/>
            <person name="Wang Z.T."/>
            <person name="Raymond J."/>
            <person name="Chen M."/>
            <person name="Blankenship R.E."/>
            <person name="Touchman J.W."/>
        </authorList>
    </citation>
    <scope>NUCLEOTIDE SEQUENCE [LARGE SCALE GENOMIC DNA]</scope>
    <source>
        <strain>ATCC 51547 / Ice1</strain>
    </source>
</reference>
<keyword id="KW-1185">Reference proteome</keyword>
<keyword id="KW-0687">Ribonucleoprotein</keyword>
<keyword id="KW-0689">Ribosomal protein</keyword>
<keyword id="KW-0694">RNA-binding</keyword>
<keyword id="KW-0699">rRNA-binding</keyword>
<accession>B0TE71</accession>
<name>RS18_HELMI</name>
<dbReference type="EMBL" id="CP000930">
    <property type="protein sequence ID" value="ABZ84266.1"/>
    <property type="molecule type" value="Genomic_DNA"/>
</dbReference>
<dbReference type="RefSeq" id="WP_012282771.1">
    <property type="nucleotide sequence ID" value="NC_010337.2"/>
</dbReference>
<dbReference type="SMR" id="B0TE71"/>
<dbReference type="STRING" id="498761.HM1_1696"/>
<dbReference type="KEGG" id="hmo:HM1_1696"/>
<dbReference type="eggNOG" id="COG0238">
    <property type="taxonomic scope" value="Bacteria"/>
</dbReference>
<dbReference type="HOGENOM" id="CLU_148710_2_2_9"/>
<dbReference type="OrthoDB" id="9812008at2"/>
<dbReference type="Proteomes" id="UP000008550">
    <property type="component" value="Chromosome"/>
</dbReference>
<dbReference type="GO" id="GO:0022627">
    <property type="term" value="C:cytosolic small ribosomal subunit"/>
    <property type="evidence" value="ECO:0007669"/>
    <property type="project" value="TreeGrafter"/>
</dbReference>
<dbReference type="GO" id="GO:0070181">
    <property type="term" value="F:small ribosomal subunit rRNA binding"/>
    <property type="evidence" value="ECO:0007669"/>
    <property type="project" value="TreeGrafter"/>
</dbReference>
<dbReference type="GO" id="GO:0003735">
    <property type="term" value="F:structural constituent of ribosome"/>
    <property type="evidence" value="ECO:0007669"/>
    <property type="project" value="InterPro"/>
</dbReference>
<dbReference type="GO" id="GO:0006412">
    <property type="term" value="P:translation"/>
    <property type="evidence" value="ECO:0007669"/>
    <property type="project" value="UniProtKB-UniRule"/>
</dbReference>
<dbReference type="Gene3D" id="4.10.640.10">
    <property type="entry name" value="Ribosomal protein S18"/>
    <property type="match status" value="1"/>
</dbReference>
<dbReference type="HAMAP" id="MF_00270">
    <property type="entry name" value="Ribosomal_bS18"/>
    <property type="match status" value="1"/>
</dbReference>
<dbReference type="InterPro" id="IPR001648">
    <property type="entry name" value="Ribosomal_bS18"/>
</dbReference>
<dbReference type="InterPro" id="IPR018275">
    <property type="entry name" value="Ribosomal_bS18_CS"/>
</dbReference>
<dbReference type="InterPro" id="IPR036870">
    <property type="entry name" value="Ribosomal_bS18_sf"/>
</dbReference>
<dbReference type="NCBIfam" id="TIGR00165">
    <property type="entry name" value="S18"/>
    <property type="match status" value="1"/>
</dbReference>
<dbReference type="PANTHER" id="PTHR13479">
    <property type="entry name" value="30S RIBOSOMAL PROTEIN S18"/>
    <property type="match status" value="1"/>
</dbReference>
<dbReference type="PANTHER" id="PTHR13479:SF40">
    <property type="entry name" value="SMALL RIBOSOMAL SUBUNIT PROTEIN BS18M"/>
    <property type="match status" value="1"/>
</dbReference>
<dbReference type="Pfam" id="PF01084">
    <property type="entry name" value="Ribosomal_S18"/>
    <property type="match status" value="1"/>
</dbReference>
<dbReference type="PRINTS" id="PR00974">
    <property type="entry name" value="RIBOSOMALS18"/>
</dbReference>
<dbReference type="SUPFAM" id="SSF46911">
    <property type="entry name" value="Ribosomal protein S18"/>
    <property type="match status" value="1"/>
</dbReference>
<dbReference type="PROSITE" id="PS00057">
    <property type="entry name" value="RIBOSOMAL_S18"/>
    <property type="match status" value="1"/>
</dbReference>